<gene>
    <name evidence="20" type="primary">CHRNB4</name>
</gene>
<protein>
    <recommendedName>
        <fullName>Neuronal acetylcholine receptor subunit beta-4</fullName>
    </recommendedName>
</protein>
<keyword id="KW-0002">3D-structure</keyword>
<keyword id="KW-0025">Alternative splicing</keyword>
<keyword id="KW-1003">Cell membrane</keyword>
<keyword id="KW-1015">Disulfide bond</keyword>
<keyword id="KW-0325">Glycoprotein</keyword>
<keyword id="KW-0407">Ion channel</keyword>
<keyword id="KW-0406">Ion transport</keyword>
<keyword id="KW-1071">Ligand-gated ion channel</keyword>
<keyword id="KW-0472">Membrane</keyword>
<keyword id="KW-1267">Proteomics identification</keyword>
<keyword id="KW-0675">Receptor</keyword>
<keyword id="KW-1185">Reference proteome</keyword>
<keyword id="KW-0732">Signal</keyword>
<keyword id="KW-0770">Synapse</keyword>
<keyword id="KW-0812">Transmembrane</keyword>
<keyword id="KW-1133">Transmembrane helix</keyword>
<keyword id="KW-0813">Transport</keyword>
<name>ACHB4_HUMAN</name>
<feature type="signal peptide" evidence="6">
    <location>
        <begin position="1"/>
        <end position="21"/>
    </location>
</feature>
<feature type="chain" id="PRO_0000000389" description="Neuronal acetylcholine receptor subunit beta-4">
    <location>
        <begin position="22"/>
        <end position="498"/>
    </location>
</feature>
<feature type="topological domain" description="Extracellular" evidence="6">
    <location>
        <begin position="22"/>
        <end position="239"/>
    </location>
</feature>
<feature type="transmembrane region" description="Helical" evidence="14 21 22">
    <location>
        <begin position="240"/>
        <end position="255"/>
    </location>
</feature>
<feature type="topological domain" description="Cytoplasmic" evidence="6">
    <location>
        <begin position="256"/>
        <end position="261"/>
    </location>
</feature>
<feature type="transmembrane region" description="Helical" evidence="14 21 22">
    <location>
        <begin position="262"/>
        <end position="277"/>
    </location>
</feature>
<feature type="topological domain" description="Extracellular" evidence="6">
    <location>
        <begin position="278"/>
        <end position="296"/>
    </location>
</feature>
<feature type="transmembrane region" description="Helical" evidence="14 21 22">
    <location>
        <begin position="297"/>
        <end position="321"/>
    </location>
</feature>
<feature type="topological domain" description="Cytoplasmic" evidence="6">
    <location>
        <begin position="322"/>
        <end position="454"/>
    </location>
</feature>
<feature type="transmembrane region" description="Helical" evidence="14 21 22">
    <location>
        <begin position="455"/>
        <end position="478"/>
    </location>
</feature>
<feature type="topological domain" description="Extracellular" evidence="6">
    <location>
        <begin position="479"/>
        <end position="498"/>
    </location>
</feature>
<feature type="region of interest" description="Disordered" evidence="7">
    <location>
        <begin position="357"/>
        <end position="377"/>
    </location>
</feature>
<feature type="binding site" evidence="14 22">
    <location>
        <position position="262"/>
    </location>
    <ligand>
        <name>Na(+)</name>
        <dbReference type="ChEBI" id="CHEBI:29101"/>
    </ligand>
</feature>
<feature type="site" description="Key residue that facilitates effective access of the conotoxin BuIA to the channel binding site" evidence="3">
    <location>
        <position position="82"/>
    </location>
</feature>
<feature type="site" description="Key residue for a low dissociation (K(off)) from the conotoxin BuIA" evidence="3">
    <location>
        <position position="134"/>
    </location>
</feature>
<feature type="glycosylation site" description="N-linked (GlcNAc...) asparagine" evidence="6">
    <location>
        <position position="36"/>
    </location>
</feature>
<feature type="glycosylation site" description="N-linked (GlcNAc...) asparagine" evidence="6">
    <location>
        <position position="93"/>
    </location>
</feature>
<feature type="glycosylation site" description="N-linked (GlcNAc...) asparagine" evidence="6">
    <location>
        <position position="138"/>
    </location>
</feature>
<feature type="glycosylation site" description="N-linked (GlcNAc...) asparagine" evidence="6">
    <location>
        <position position="166"/>
    </location>
</feature>
<feature type="disulfide bond" evidence="14 21 22">
    <location>
        <begin position="153"/>
        <end position="167"/>
    </location>
</feature>
<feature type="splice variant" id="VSP_046674" description="In isoform 2." evidence="18">
    <original>NADGTYEVSVYTNLIVRSNGSVLWLPPAIYKSACKIEVKYFPFDQQNCTLKFRSWTYDHTEIDMVLMTPTASMDDFTPSGEWDIVALPGRRTVNPQDP</original>
    <variation>KSLRTGSTWLWWWTGCSCGCSCLCASWALWGSSYRPSSRPMQLLRGPTLPSVTEGPLGCGVRGCEWPGGHFAASFWVVADEALSKYVSIGHQPHQTSHSRGTGKDGGLGCPL</variation>
    <location>
        <begin position="120"/>
        <end position="217"/>
    </location>
</feature>
<feature type="splice variant" id="VSP_046675" description="In isoform 2." evidence="18">
    <location>
        <begin position="218"/>
        <end position="498"/>
    </location>
</feature>
<feature type="sequence variant" id="VAR_048174" description="In dbSNP:rs12914008.">
    <original>T</original>
    <variation>I</variation>
    <location>
        <position position="91"/>
    </location>
</feature>
<feature type="sequence variant" id="VAR_013241" description="In dbSNP:rs141876090." evidence="9">
    <original>R</original>
    <variation>W</variation>
    <location>
        <position position="136"/>
    </location>
</feature>
<feature type="sequence variant" id="VAR_013242" description="In dbSNP:rs56218866." evidence="9">
    <original>S</original>
    <variation>G</variation>
    <location>
        <position position="140"/>
    </location>
</feature>
<feature type="sequence variant" id="VAR_013243" description="In dbSNP:rs61737502." evidence="9">
    <original>M</original>
    <variation>V</variation>
    <location>
        <position position="467"/>
    </location>
</feature>
<feature type="mutagenesis site" description="Increases potency of agonists." evidence="8">
    <original>L</original>
    <variation>T</variation>
    <location>
        <position position="272"/>
    </location>
</feature>
<feature type="sequence conflict" description="In Ref. 9; CAA48336." evidence="19" ref="9">
    <original>EQ</original>
    <variation>DE</variation>
    <location>
        <begin position="72"/>
        <end position="73"/>
    </location>
</feature>
<feature type="sequence conflict" description="In Ref. 4; CAC34819." evidence="19" ref="4">
    <location>
        <position position="121"/>
    </location>
</feature>
<feature type="helix" evidence="23">
    <location>
        <begin position="26"/>
        <end position="34"/>
    </location>
</feature>
<feature type="turn" evidence="23">
    <location>
        <begin position="35"/>
        <end position="39"/>
    </location>
</feature>
<feature type="strand" evidence="23">
    <location>
        <begin position="42"/>
        <end position="44"/>
    </location>
</feature>
<feature type="strand" evidence="23">
    <location>
        <begin position="48"/>
        <end position="51"/>
    </location>
</feature>
<feature type="strand" evidence="23">
    <location>
        <begin position="57"/>
        <end position="69"/>
    </location>
</feature>
<feature type="turn" evidence="23">
    <location>
        <begin position="70"/>
        <end position="73"/>
    </location>
</feature>
<feature type="strand" evidence="23">
    <location>
        <begin position="74"/>
        <end position="86"/>
    </location>
</feature>
<feature type="turn" evidence="23">
    <location>
        <begin position="94"/>
        <end position="98"/>
    </location>
</feature>
<feature type="strand" evidence="23">
    <location>
        <begin position="101"/>
        <end position="106"/>
    </location>
</feature>
<feature type="strand" evidence="23">
    <location>
        <begin position="115"/>
        <end position="118"/>
    </location>
</feature>
<feature type="strand" evidence="23">
    <location>
        <begin position="120"/>
        <end position="123"/>
    </location>
</feature>
<feature type="strand" evidence="23">
    <location>
        <begin position="132"/>
        <end position="136"/>
    </location>
</feature>
<feature type="strand" evidence="23">
    <location>
        <begin position="140"/>
        <end position="143"/>
    </location>
</feature>
<feature type="strand" evidence="23">
    <location>
        <begin position="146"/>
        <end position="152"/>
    </location>
</feature>
<feature type="turn" evidence="23">
    <location>
        <begin position="158"/>
        <end position="161"/>
    </location>
</feature>
<feature type="strand" evidence="23">
    <location>
        <begin position="164"/>
        <end position="175"/>
    </location>
</feature>
<feature type="turn" evidence="23">
    <location>
        <begin position="178"/>
        <end position="180"/>
    </location>
</feature>
<feature type="strand" evidence="23">
    <location>
        <begin position="187"/>
        <end position="189"/>
    </location>
</feature>
<feature type="strand" evidence="23">
    <location>
        <begin position="199"/>
        <end position="205"/>
    </location>
</feature>
<feature type="strand" evidence="23">
    <location>
        <begin position="207"/>
        <end position="210"/>
    </location>
</feature>
<feature type="strand" evidence="23">
    <location>
        <begin position="222"/>
        <end position="230"/>
    </location>
</feature>
<feature type="helix" evidence="23">
    <location>
        <begin position="233"/>
        <end position="248"/>
    </location>
</feature>
<feature type="helix" evidence="23">
    <location>
        <begin position="263"/>
        <end position="284"/>
    </location>
</feature>
<feature type="helix" evidence="23">
    <location>
        <begin position="294"/>
        <end position="318"/>
    </location>
</feature>
<feature type="helix" evidence="23">
    <location>
        <begin position="319"/>
        <end position="321"/>
    </location>
</feature>
<feature type="turn" evidence="23">
    <location>
        <begin position="324"/>
        <end position="326"/>
    </location>
</feature>
<feature type="helix" evidence="23">
    <location>
        <begin position="331"/>
        <end position="336"/>
    </location>
</feature>
<feature type="turn" evidence="23">
    <location>
        <begin position="337"/>
        <end position="340"/>
    </location>
</feature>
<feature type="helix" evidence="23">
    <location>
        <begin position="341"/>
        <end position="344"/>
    </location>
</feature>
<feature type="helix" evidence="23">
    <location>
        <begin position="422"/>
        <end position="477"/>
    </location>
</feature>
<organism>
    <name type="scientific">Homo sapiens</name>
    <name type="common">Human</name>
    <dbReference type="NCBI Taxonomy" id="9606"/>
    <lineage>
        <taxon>Eukaryota</taxon>
        <taxon>Metazoa</taxon>
        <taxon>Chordata</taxon>
        <taxon>Craniata</taxon>
        <taxon>Vertebrata</taxon>
        <taxon>Euteleostomi</taxon>
        <taxon>Mammalia</taxon>
        <taxon>Eutheria</taxon>
        <taxon>Euarchontoglires</taxon>
        <taxon>Primates</taxon>
        <taxon>Haplorrhini</taxon>
        <taxon>Catarrhini</taxon>
        <taxon>Hominidae</taxon>
        <taxon>Homo</taxon>
    </lineage>
</organism>
<dbReference type="EMBL" id="U62439">
    <property type="protein sequence ID" value="AAB40117.1"/>
    <property type="molecule type" value="mRNA"/>
</dbReference>
<dbReference type="EMBL" id="U48861">
    <property type="protein sequence ID" value="AAA92123.1"/>
    <property type="molecule type" value="mRNA"/>
</dbReference>
<dbReference type="EMBL" id="Y08416">
    <property type="protein sequence ID" value="CAA69693.1"/>
    <property type="molecule type" value="mRNA"/>
</dbReference>
<dbReference type="EMBL" id="AJ306454">
    <property type="protein sequence ID" value="CAC34819.1"/>
    <property type="molecule type" value="Genomic_DNA"/>
</dbReference>
<dbReference type="EMBL" id="AJ306455">
    <property type="protein sequence ID" value="CAC34819.1"/>
    <property type="status" value="JOINED"/>
    <property type="molecule type" value="Genomic_DNA"/>
</dbReference>
<dbReference type="EMBL" id="AJ306456">
    <property type="protein sequence ID" value="CAC34819.1"/>
    <property type="status" value="JOINED"/>
    <property type="molecule type" value="Genomic_DNA"/>
</dbReference>
<dbReference type="EMBL" id="AJ306457">
    <property type="protein sequence ID" value="CAC34819.1"/>
    <property type="status" value="JOINED"/>
    <property type="molecule type" value="Genomic_DNA"/>
</dbReference>
<dbReference type="EMBL" id="AJ306458">
    <property type="protein sequence ID" value="CAC34819.1"/>
    <property type="status" value="JOINED"/>
    <property type="molecule type" value="Genomic_DNA"/>
</dbReference>
<dbReference type="EMBL" id="AJ306459">
    <property type="protein sequence ID" value="CAC34819.1"/>
    <property type="status" value="JOINED"/>
    <property type="molecule type" value="Genomic_DNA"/>
</dbReference>
<dbReference type="EMBL" id="AF306329">
    <property type="protein sequence ID" value="AAL02062.1"/>
    <property type="molecule type" value="Genomic_DNA"/>
</dbReference>
<dbReference type="EMBL" id="AF306325">
    <property type="protein sequence ID" value="AAL02062.1"/>
    <property type="status" value="JOINED"/>
    <property type="molecule type" value="Genomic_DNA"/>
</dbReference>
<dbReference type="EMBL" id="AF306326">
    <property type="protein sequence ID" value="AAL02062.1"/>
    <property type="status" value="JOINED"/>
    <property type="molecule type" value="Genomic_DNA"/>
</dbReference>
<dbReference type="EMBL" id="AF306327">
    <property type="protein sequence ID" value="AAL02062.1"/>
    <property type="status" value="JOINED"/>
    <property type="molecule type" value="Genomic_DNA"/>
</dbReference>
<dbReference type="EMBL" id="AF306328">
    <property type="protein sequence ID" value="AAL02062.1"/>
    <property type="status" value="JOINED"/>
    <property type="molecule type" value="Genomic_DNA"/>
</dbReference>
<dbReference type="EMBL" id="AC022748">
    <property type="status" value="NOT_ANNOTATED_CDS"/>
    <property type="molecule type" value="Genomic_DNA"/>
</dbReference>
<dbReference type="EMBL" id="AC067863">
    <property type="status" value="NOT_ANNOTATED_CDS"/>
    <property type="molecule type" value="Genomic_DNA"/>
</dbReference>
<dbReference type="EMBL" id="BC096080">
    <property type="protein sequence ID" value="AAH96080.1"/>
    <property type="molecule type" value="mRNA"/>
</dbReference>
<dbReference type="EMBL" id="BC096081">
    <property type="protein sequence ID" value="AAH96081.1"/>
    <property type="molecule type" value="mRNA"/>
</dbReference>
<dbReference type="EMBL" id="BC096083">
    <property type="protein sequence ID" value="AAH96083.1"/>
    <property type="molecule type" value="mRNA"/>
</dbReference>
<dbReference type="EMBL" id="BC096082">
    <property type="protein sequence ID" value="AAH96082.1"/>
    <property type="molecule type" value="mRNA"/>
</dbReference>
<dbReference type="EMBL" id="AF453877">
    <property type="protein sequence ID" value="AAL57840.1"/>
    <property type="molecule type" value="Genomic_DNA"/>
</dbReference>
<dbReference type="EMBL" id="X68275">
    <property type="protein sequence ID" value="CAA48336.1"/>
    <property type="molecule type" value="mRNA"/>
</dbReference>
<dbReference type="CCDS" id="CCDS10306.1">
    <molecule id="P30926-1"/>
</dbReference>
<dbReference type="CCDS" id="CCDS58392.1">
    <molecule id="P30926-2"/>
</dbReference>
<dbReference type="PIR" id="G02421">
    <property type="entry name" value="G02421"/>
</dbReference>
<dbReference type="RefSeq" id="NP_000741.1">
    <molecule id="P30926-1"/>
    <property type="nucleotide sequence ID" value="NM_000750.5"/>
</dbReference>
<dbReference type="RefSeq" id="NP_001243496.1">
    <molecule id="P30926-2"/>
    <property type="nucleotide sequence ID" value="NM_001256567.3"/>
</dbReference>
<dbReference type="PDB" id="6PV7">
    <property type="method" value="EM"/>
    <property type="resolution" value="3.34 A"/>
    <property type="chains" value="B/C/E=22-361, B/C/E=417-498"/>
</dbReference>
<dbReference type="PDB" id="6PV8">
    <property type="method" value="EM"/>
    <property type="resolution" value="3.87 A"/>
    <property type="chains" value="B/C/E=22-361, B/C/E=417-498"/>
</dbReference>
<dbReference type="PDBsum" id="6PV7"/>
<dbReference type="PDBsum" id="6PV8"/>
<dbReference type="EMDB" id="EMD-20487"/>
<dbReference type="EMDB" id="EMD-20488"/>
<dbReference type="SMR" id="P30926"/>
<dbReference type="BioGRID" id="107565">
    <property type="interactions" value="69"/>
</dbReference>
<dbReference type="ComplexPortal" id="CPX-210">
    <property type="entry name" value="Neuronal nicotinic acetylcholine receptor complex, alpha3-alpha5-beta4"/>
</dbReference>
<dbReference type="ComplexPortal" id="CPX-213">
    <property type="entry name" value="Neuronal nicotinic acetylcholine receptor complex, alpha3-alpha6-beta4"/>
</dbReference>
<dbReference type="ComplexPortal" id="CPX-2190">
    <property type="entry name" value="Neuronal nicotinic acetylcholine receptor complex, alpha2-beta4"/>
</dbReference>
<dbReference type="ComplexPortal" id="CPX-2200">
    <property type="entry name" value="Neuronal nicotinic acetylcholine receptor complex, alpha3-beta4"/>
</dbReference>
<dbReference type="ComplexPortal" id="CPX-2203">
    <property type="entry name" value="Neuronal nicotinic acetylcholine receptor complex, alpha4-beta4"/>
</dbReference>
<dbReference type="CORUM" id="P30926"/>
<dbReference type="FunCoup" id="P30926">
    <property type="interactions" value="513"/>
</dbReference>
<dbReference type="IntAct" id="P30926">
    <property type="interactions" value="67"/>
</dbReference>
<dbReference type="STRING" id="9606.ENSP00000261751"/>
<dbReference type="BindingDB" id="P30926"/>
<dbReference type="ChEMBL" id="CHEMBL1907591"/>
<dbReference type="ChEMBL" id="CHEMBL1907594"/>
<dbReference type="ChEMBL" id="CHEMBL2109230"/>
<dbReference type="ChEMBL" id="CHEMBL3038459"/>
<dbReference type="ChEMBL" id="CHEMBL3137273"/>
<dbReference type="ChEMBL" id="CHEMBL3137285"/>
<dbReference type="ChEMBL" id="CHEMBL3885595"/>
<dbReference type="DrugBank" id="DB00237">
    <property type="generic name" value="Butabarbital"/>
</dbReference>
<dbReference type="DrugBank" id="DB00565">
    <property type="generic name" value="Cisatracurium"/>
</dbReference>
<dbReference type="DrugBank" id="DB09028">
    <property type="generic name" value="Cytisine"/>
</dbReference>
<dbReference type="DrugBank" id="DB00514">
    <property type="generic name" value="Dextromethorphan"/>
</dbReference>
<dbReference type="DrugBank" id="DB07720">
    <property type="generic name" value="Epibatidine"/>
</dbReference>
<dbReference type="DrugBank" id="DB00898">
    <property type="generic name" value="Ethanol"/>
</dbReference>
<dbReference type="DrugBank" id="DB00472">
    <property type="generic name" value="Fluoxetine"/>
</dbReference>
<dbReference type="DrugBank" id="DB01227">
    <property type="generic name" value="Levacetylmethadol"/>
</dbReference>
<dbReference type="DrugBank" id="DB00184">
    <property type="generic name" value="Nicotine"/>
</dbReference>
<dbReference type="DrugBank" id="DB01090">
    <property type="generic name" value="Pentolinium"/>
</dbReference>
<dbReference type="DrugBank" id="DB00202">
    <property type="generic name" value="Succinylcholine"/>
</dbReference>
<dbReference type="DrugCentral" id="P30926"/>
<dbReference type="GlyCosmos" id="P30926">
    <property type="glycosylation" value="4 sites, No reported glycans"/>
</dbReference>
<dbReference type="GlyGen" id="P30926">
    <property type="glycosylation" value="4 sites"/>
</dbReference>
<dbReference type="iPTMnet" id="P30926"/>
<dbReference type="PhosphoSitePlus" id="P30926"/>
<dbReference type="BioMuta" id="CHRNB4"/>
<dbReference type="DMDM" id="2506129"/>
<dbReference type="jPOST" id="P30926"/>
<dbReference type="MassIVE" id="P30926"/>
<dbReference type="PaxDb" id="9606-ENSP00000261751"/>
<dbReference type="PeptideAtlas" id="P30926"/>
<dbReference type="Antibodypedia" id="15128">
    <property type="antibodies" value="173 antibodies from 28 providers"/>
</dbReference>
<dbReference type="DNASU" id="1143"/>
<dbReference type="Ensembl" id="ENST00000261751.8">
    <molecule id="P30926-1"/>
    <property type="protein sequence ID" value="ENSP00000261751.3"/>
    <property type="gene ID" value="ENSG00000117971.12"/>
</dbReference>
<dbReference type="Ensembl" id="ENST00000412074.6">
    <molecule id="P30926-2"/>
    <property type="protein sequence ID" value="ENSP00000416386.2"/>
    <property type="gene ID" value="ENSG00000117971.12"/>
</dbReference>
<dbReference type="GeneID" id="1143"/>
<dbReference type="KEGG" id="hsa:1143"/>
<dbReference type="MANE-Select" id="ENST00000261751.8">
    <property type="protein sequence ID" value="ENSP00000261751.3"/>
    <property type="RefSeq nucleotide sequence ID" value="NM_000750.5"/>
    <property type="RefSeq protein sequence ID" value="NP_000741.1"/>
</dbReference>
<dbReference type="UCSC" id="uc002bed.2">
    <molecule id="P30926-1"/>
    <property type="organism name" value="human"/>
</dbReference>
<dbReference type="AGR" id="HGNC:1964"/>
<dbReference type="CTD" id="1143"/>
<dbReference type="DisGeNET" id="1143"/>
<dbReference type="GeneCards" id="CHRNB4"/>
<dbReference type="HGNC" id="HGNC:1964">
    <property type="gene designation" value="CHRNB4"/>
</dbReference>
<dbReference type="HPA" id="ENSG00000117971">
    <property type="expression patterns" value="Tissue enhanced (adrenal gland, lymphoid tissue, retina, testis)"/>
</dbReference>
<dbReference type="MalaCards" id="CHRNB4"/>
<dbReference type="MIM" id="118509">
    <property type="type" value="gene"/>
</dbReference>
<dbReference type="neXtProt" id="NX_P30926"/>
<dbReference type="OpenTargets" id="ENSG00000117971"/>
<dbReference type="PharmGKB" id="PA26496"/>
<dbReference type="VEuPathDB" id="HostDB:ENSG00000117971"/>
<dbReference type="eggNOG" id="KOG3645">
    <property type="taxonomic scope" value="Eukaryota"/>
</dbReference>
<dbReference type="GeneTree" id="ENSGT00940000158708"/>
<dbReference type="HOGENOM" id="CLU_018074_1_1_1"/>
<dbReference type="InParanoid" id="P30926"/>
<dbReference type="OMA" id="TCKIEVK"/>
<dbReference type="OrthoDB" id="5975154at2759"/>
<dbReference type="PAN-GO" id="P30926">
    <property type="GO annotations" value="9 GO annotations based on evolutionary models"/>
</dbReference>
<dbReference type="PhylomeDB" id="P30926"/>
<dbReference type="TreeFam" id="TF315605"/>
<dbReference type="PathwayCommons" id="P30926"/>
<dbReference type="Reactome" id="R-HSA-629587">
    <property type="pathway name" value="Highly sodium permeable postsynaptic acetylcholine nicotinic receptors"/>
</dbReference>
<dbReference type="Reactome" id="R-HSA-629594">
    <property type="pathway name" value="Highly calcium permeable postsynaptic nicotinic acetylcholine receptors"/>
</dbReference>
<dbReference type="Reactome" id="R-HSA-629597">
    <property type="pathway name" value="Highly calcium permeable nicotinic acetylcholine receptors"/>
</dbReference>
<dbReference type="Reactome" id="R-HSA-6798695">
    <property type="pathway name" value="Neutrophil degranulation"/>
</dbReference>
<dbReference type="SignaLink" id="P30926"/>
<dbReference type="BioGRID-ORCS" id="1143">
    <property type="hits" value="9 hits in 1154 CRISPR screens"/>
</dbReference>
<dbReference type="GeneWiki" id="CHRNB4"/>
<dbReference type="GenomeRNAi" id="1143"/>
<dbReference type="Pharos" id="P30926">
    <property type="development level" value="Tclin"/>
</dbReference>
<dbReference type="PRO" id="PR:P30926"/>
<dbReference type="Proteomes" id="UP000005640">
    <property type="component" value="Chromosome 15"/>
</dbReference>
<dbReference type="RNAct" id="P30926">
    <property type="molecule type" value="protein"/>
</dbReference>
<dbReference type="Bgee" id="ENSG00000117971">
    <property type="expression patterns" value="Expressed in primordial germ cell in gonad and 102 other cell types or tissues"/>
</dbReference>
<dbReference type="ExpressionAtlas" id="P30926">
    <property type="expression patterns" value="baseline and differential"/>
</dbReference>
<dbReference type="GO" id="GO:0005892">
    <property type="term" value="C:acetylcholine-gated channel complex"/>
    <property type="evidence" value="ECO:0000314"/>
    <property type="project" value="UniProtKB"/>
</dbReference>
<dbReference type="GO" id="GO:0034703">
    <property type="term" value="C:cation channel complex"/>
    <property type="evidence" value="ECO:0000314"/>
    <property type="project" value="UniProt"/>
</dbReference>
<dbReference type="GO" id="GO:0098981">
    <property type="term" value="C:cholinergic synapse"/>
    <property type="evidence" value="ECO:0007669"/>
    <property type="project" value="Ensembl"/>
</dbReference>
<dbReference type="GO" id="GO:0016020">
    <property type="term" value="C:membrane"/>
    <property type="evidence" value="ECO:0000303"/>
    <property type="project" value="UniProtKB"/>
</dbReference>
<dbReference type="GO" id="GO:0043005">
    <property type="term" value="C:neuron projection"/>
    <property type="evidence" value="ECO:0000318"/>
    <property type="project" value="GO_Central"/>
</dbReference>
<dbReference type="GO" id="GO:0098878">
    <property type="term" value="C:neurotransmitter receptor complex"/>
    <property type="evidence" value="ECO:0000314"/>
    <property type="project" value="UniProt"/>
</dbReference>
<dbReference type="GO" id="GO:0005886">
    <property type="term" value="C:plasma membrane"/>
    <property type="evidence" value="ECO:0000318"/>
    <property type="project" value="GO_Central"/>
</dbReference>
<dbReference type="GO" id="GO:0099634">
    <property type="term" value="C:postsynaptic specialization membrane"/>
    <property type="evidence" value="ECO:0007669"/>
    <property type="project" value="Ensembl"/>
</dbReference>
<dbReference type="GO" id="GO:0035579">
    <property type="term" value="C:specific granule membrane"/>
    <property type="evidence" value="ECO:0000304"/>
    <property type="project" value="Reactome"/>
</dbReference>
<dbReference type="GO" id="GO:0045202">
    <property type="term" value="C:synapse"/>
    <property type="evidence" value="ECO:0000318"/>
    <property type="project" value="GO_Central"/>
</dbReference>
<dbReference type="GO" id="GO:0070821">
    <property type="term" value="C:tertiary granule membrane"/>
    <property type="evidence" value="ECO:0000304"/>
    <property type="project" value="Reactome"/>
</dbReference>
<dbReference type="GO" id="GO:0015464">
    <property type="term" value="F:acetylcholine receptor activity"/>
    <property type="evidence" value="ECO:0000314"/>
    <property type="project" value="UniProtKB"/>
</dbReference>
<dbReference type="GO" id="GO:0022848">
    <property type="term" value="F:acetylcholine-gated monoatomic cation-selective channel activity"/>
    <property type="evidence" value="ECO:0000314"/>
    <property type="project" value="UniProtKB"/>
</dbReference>
<dbReference type="GO" id="GO:0015276">
    <property type="term" value="F:ligand-gated monoatomic ion channel activity"/>
    <property type="evidence" value="ECO:0000304"/>
    <property type="project" value="DFLAT"/>
</dbReference>
<dbReference type="GO" id="GO:0095500">
    <property type="term" value="P:acetylcholine receptor signaling pathway"/>
    <property type="evidence" value="ECO:0000318"/>
    <property type="project" value="GO_Central"/>
</dbReference>
<dbReference type="GO" id="GO:0035095">
    <property type="term" value="P:behavioral response to nicotine"/>
    <property type="evidence" value="ECO:0007669"/>
    <property type="project" value="Ensembl"/>
</dbReference>
<dbReference type="GO" id="GO:0007268">
    <property type="term" value="P:chemical synaptic transmission"/>
    <property type="evidence" value="ECO:0000318"/>
    <property type="project" value="GO_Central"/>
</dbReference>
<dbReference type="GO" id="GO:0007626">
    <property type="term" value="P:locomotory behavior"/>
    <property type="evidence" value="ECO:0007669"/>
    <property type="project" value="Ensembl"/>
</dbReference>
<dbReference type="GO" id="GO:0051899">
    <property type="term" value="P:membrane depolarization"/>
    <property type="evidence" value="ECO:0000318"/>
    <property type="project" value="GO_Central"/>
</dbReference>
<dbReference type="GO" id="GO:0034220">
    <property type="term" value="P:monoatomic ion transmembrane transport"/>
    <property type="evidence" value="ECO:0000318"/>
    <property type="project" value="GO_Central"/>
</dbReference>
<dbReference type="GO" id="GO:0006811">
    <property type="term" value="P:monoatomic ion transport"/>
    <property type="evidence" value="ECO:0000304"/>
    <property type="project" value="UniProtKB"/>
</dbReference>
<dbReference type="GO" id="GO:0019228">
    <property type="term" value="P:neuronal action potential"/>
    <property type="evidence" value="ECO:0007669"/>
    <property type="project" value="Ensembl"/>
</dbReference>
<dbReference type="GO" id="GO:0051971">
    <property type="term" value="P:positive regulation of transmission of nerve impulse"/>
    <property type="evidence" value="ECO:0007669"/>
    <property type="project" value="Ensembl"/>
</dbReference>
<dbReference type="GO" id="GO:0046928">
    <property type="term" value="P:regulation of neurotransmitter secretion"/>
    <property type="evidence" value="ECO:0000303"/>
    <property type="project" value="UniProtKB"/>
</dbReference>
<dbReference type="GO" id="GO:0006940">
    <property type="term" value="P:regulation of smooth muscle contraction"/>
    <property type="evidence" value="ECO:0007669"/>
    <property type="project" value="Ensembl"/>
</dbReference>
<dbReference type="GO" id="GO:0007165">
    <property type="term" value="P:signal transduction"/>
    <property type="evidence" value="ECO:0000314"/>
    <property type="project" value="UniProtKB"/>
</dbReference>
<dbReference type="GO" id="GO:0006939">
    <property type="term" value="P:smooth muscle contraction"/>
    <property type="evidence" value="ECO:0007669"/>
    <property type="project" value="Ensembl"/>
</dbReference>
<dbReference type="GO" id="GO:0060084">
    <property type="term" value="P:synaptic transmission involved in micturition"/>
    <property type="evidence" value="ECO:0000315"/>
    <property type="project" value="UniProtKB"/>
</dbReference>
<dbReference type="GO" id="GO:0007271">
    <property type="term" value="P:synaptic transmission, cholinergic"/>
    <property type="evidence" value="ECO:0000304"/>
    <property type="project" value="ProtInc"/>
</dbReference>
<dbReference type="CDD" id="cd19064">
    <property type="entry name" value="LGIC_TM_nAChR"/>
    <property type="match status" value="1"/>
</dbReference>
<dbReference type="FunFam" id="2.70.170.10:FF:000006">
    <property type="entry name" value="Cholinergic receptor nicotinic beta 2 subunit"/>
    <property type="match status" value="1"/>
</dbReference>
<dbReference type="FunFam" id="1.20.58.390:FF:000008">
    <property type="entry name" value="Cholinergic receptor nicotinic beta 4 subunit"/>
    <property type="match status" value="1"/>
</dbReference>
<dbReference type="FunFam" id="1.20.58.390:FF:000034">
    <property type="entry name" value="Cholinergic receptor nicotinic beta 4 subunit"/>
    <property type="match status" value="1"/>
</dbReference>
<dbReference type="Gene3D" id="2.70.170.10">
    <property type="entry name" value="Neurotransmitter-gated ion-channel ligand-binding domain"/>
    <property type="match status" value="1"/>
</dbReference>
<dbReference type="Gene3D" id="1.20.58.390">
    <property type="entry name" value="Neurotransmitter-gated ion-channel transmembrane domain"/>
    <property type="match status" value="2"/>
</dbReference>
<dbReference type="InterPro" id="IPR006202">
    <property type="entry name" value="Neur_chan_lig-bd"/>
</dbReference>
<dbReference type="InterPro" id="IPR036734">
    <property type="entry name" value="Neur_chan_lig-bd_sf"/>
</dbReference>
<dbReference type="InterPro" id="IPR006201">
    <property type="entry name" value="Neur_channel"/>
</dbReference>
<dbReference type="InterPro" id="IPR036719">
    <property type="entry name" value="Neuro-gated_channel_TM_sf"/>
</dbReference>
<dbReference type="InterPro" id="IPR038050">
    <property type="entry name" value="Neuro_actylchol_rec"/>
</dbReference>
<dbReference type="InterPro" id="IPR006029">
    <property type="entry name" value="Neurotrans-gated_channel_TM"/>
</dbReference>
<dbReference type="InterPro" id="IPR018000">
    <property type="entry name" value="Neurotransmitter_ion_chnl_CS"/>
</dbReference>
<dbReference type="InterPro" id="IPR002394">
    <property type="entry name" value="Nicotinic_acetylcholine_rcpt"/>
</dbReference>
<dbReference type="NCBIfam" id="TIGR00860">
    <property type="entry name" value="LIC"/>
    <property type="match status" value="1"/>
</dbReference>
<dbReference type="PANTHER" id="PTHR18945">
    <property type="entry name" value="NEUROTRANSMITTER GATED ION CHANNEL"/>
    <property type="match status" value="1"/>
</dbReference>
<dbReference type="Pfam" id="PF02931">
    <property type="entry name" value="Neur_chan_LBD"/>
    <property type="match status" value="1"/>
</dbReference>
<dbReference type="Pfam" id="PF02932">
    <property type="entry name" value="Neur_chan_memb"/>
    <property type="match status" value="1"/>
</dbReference>
<dbReference type="PRINTS" id="PR00254">
    <property type="entry name" value="NICOTINICR"/>
</dbReference>
<dbReference type="PRINTS" id="PR00252">
    <property type="entry name" value="NRIONCHANNEL"/>
</dbReference>
<dbReference type="SUPFAM" id="SSF90112">
    <property type="entry name" value="Neurotransmitter-gated ion-channel transmembrane pore"/>
    <property type="match status" value="1"/>
</dbReference>
<dbReference type="SUPFAM" id="SSF63712">
    <property type="entry name" value="Nicotinic receptor ligand binding domain-like"/>
    <property type="match status" value="1"/>
</dbReference>
<dbReference type="PROSITE" id="PS00236">
    <property type="entry name" value="NEUROTR_ION_CHANNEL"/>
    <property type="match status" value="1"/>
</dbReference>
<evidence type="ECO:0000250" key="1">
    <source>
        <dbReference type="UniProtKB" id="P04757"/>
    </source>
</evidence>
<evidence type="ECO:0000250" key="2">
    <source>
        <dbReference type="UniProtKB" id="P04758"/>
    </source>
</evidence>
<evidence type="ECO:0000250" key="3">
    <source>
        <dbReference type="UniProtKB" id="P12392"/>
    </source>
</evidence>
<evidence type="ECO:0000250" key="4">
    <source>
        <dbReference type="UniProtKB" id="P17787"/>
    </source>
</evidence>
<evidence type="ECO:0000250" key="5">
    <source>
        <dbReference type="UniProtKB" id="Q8R493"/>
    </source>
</evidence>
<evidence type="ECO:0000255" key="6"/>
<evidence type="ECO:0000256" key="7">
    <source>
        <dbReference type="SAM" id="MobiDB-lite"/>
    </source>
</evidence>
<evidence type="ECO:0000269" key="8">
    <source>
    </source>
</evidence>
<evidence type="ECO:0000269" key="9">
    <source>
    </source>
</evidence>
<evidence type="ECO:0000269" key="10">
    <source>
    </source>
</evidence>
<evidence type="ECO:0000269" key="11">
    <source>
    </source>
</evidence>
<evidence type="ECO:0000269" key="12">
    <source>
    </source>
</evidence>
<evidence type="ECO:0000269" key="13">
    <source>
    </source>
</evidence>
<evidence type="ECO:0000269" key="14">
    <source>
    </source>
</evidence>
<evidence type="ECO:0000269" key="15">
    <source>
    </source>
</evidence>
<evidence type="ECO:0000269" key="16">
    <source>
    </source>
</evidence>
<evidence type="ECO:0000269" key="17">
    <source>
    </source>
</evidence>
<evidence type="ECO:0000303" key="18">
    <source>
    </source>
</evidence>
<evidence type="ECO:0000305" key="19"/>
<evidence type="ECO:0000312" key="20">
    <source>
        <dbReference type="HGNC" id="HGNC:1964"/>
    </source>
</evidence>
<evidence type="ECO:0007744" key="21">
    <source>
        <dbReference type="PDB" id="6PV7"/>
    </source>
</evidence>
<evidence type="ECO:0007744" key="22">
    <source>
        <dbReference type="PDB" id="6PV8"/>
    </source>
</evidence>
<evidence type="ECO:0007829" key="23">
    <source>
        <dbReference type="PDB" id="6PV7"/>
    </source>
</evidence>
<comment type="function">
    <text evidence="3 5 8 12 14 15 16 17">Component of neuronal acetylcholine receptors (nAChRs) that function as pentameric, ligand-gated cation channels with high calcium permeability among other activities. nAChRs are excitatory neurotrasnmitter receptors formed by a collection of nAChR subunits known to mediate synaptic transmission in the nervous system and the neuromuscular junction. Each nAchR subunit confers differential attributes to channel properties, including activation, deactivation and desensitization kinetics, pH sensitivity, cation permeability, and binding to allosteric modulators (PubMed:20881005, PubMed:31488329, PubMed:8663494, PubMed:8906617, PubMed:9203638). CHRNB4 forms heteropentameric neuronal acetylcholine receptors with CHRNA2, CHRNA3 and CHRNA4, as well as CHRNA5 and CHRNB3 as accesory subunits (PubMed:11118490, PubMed:20881005, PubMed:8663494). CHRNA3:CHRNB4 being predominant in neurons of the autonomic ganglia, it is known as ganglionic nicotinic receptor (PubMed:31488329). CHRNA3:CHRNB4 or CHRNA3:CHRNA5:CHRNB4 play also an important role in the habenulo-interpeduncular tract, modulating the mesolimbic dopamine system and affecting reward circuits and addiction (By similarity). Hypothalamic CHRNA3:CHRNB4 nAChR activation by nicotine leads to activation of POMC neurons and a decrease in food intake (By similarity).</text>
</comment>
<comment type="catalytic activity">
    <reaction evidence="12 17">
        <text>Ca(2+)(in) = Ca(2+)(out)</text>
        <dbReference type="Rhea" id="RHEA:29671"/>
        <dbReference type="ChEBI" id="CHEBI:29108"/>
    </reaction>
</comment>
<comment type="catalytic activity">
    <reaction evidence="2">
        <text>K(+)(in) = K(+)(out)</text>
        <dbReference type="Rhea" id="RHEA:29463"/>
        <dbReference type="ChEBI" id="CHEBI:29103"/>
    </reaction>
</comment>
<comment type="catalytic activity">
    <reaction evidence="4">
        <text>Na(+)(in) = Na(+)(out)</text>
        <dbReference type="Rhea" id="RHEA:34963"/>
        <dbReference type="ChEBI" id="CHEBI:29101"/>
    </reaction>
</comment>
<comment type="activity regulation">
    <text evidence="8 10 12 14 16">Activated by a myriad of ligands such as acetylcholine, cytisine, nicotine, choline and epibatidine (PubMed:11118490, PubMed:20881005, PubMed:31488329, PubMed:8906617). The heteropentamer CHRNA3:CHRNB4 activity is blocked by the alpha-conotoxin ImI and AuIB (PubMed:15609996).</text>
</comment>
<comment type="subunit">
    <text evidence="8 11 12 13 14 15 16">Neuronal AChR is composed of two different types of subunits: alpha and beta. CHRNB4/Beta-4 subunit can be combined to CHRNA2/alpha-2, CHRNA3/alpha-3 or CHRNA4/alpha-4, CHRNA5/alpha-5 and CHRNB3/beta-3 to give rise to functional receptors (PubMed:11118490, PubMed:20881005, PubMed:31488329, PubMed:8663494, PubMed:8906617). Forms stoichiometries such as (CHRNA3)2:(CHRNB4)3 or (CHRNA3:CHRNB4)2:CHRNB3 (PubMed:11118490). Interacts with RIC3; which is required for proper folding and assembly (PubMed:16120769). Interacts with LYPD6 (PubMed:27344019).</text>
</comment>
<comment type="interaction">
    <interactant intactId="EBI-9009018">
        <id>P30926</id>
    </interactant>
    <interactant intactId="EBI-16439278">
        <id>Q6FHY5</id>
        <label>MEOX2</label>
    </interactant>
    <organismsDiffer>false</organismsDiffer>
    <experiments>3</experiments>
</comment>
<comment type="subcellular location">
    <subcellularLocation>
        <location evidence="1">Synaptic cell membrane</location>
        <topology evidence="6">Multi-pass membrane protein</topology>
    </subcellularLocation>
    <subcellularLocation>
        <location evidence="1">Cell membrane</location>
        <topology evidence="6">Multi-pass membrane protein</topology>
    </subcellularLocation>
</comment>
<comment type="alternative products">
    <event type="alternative splicing"/>
    <isoform>
        <id>P30926-1</id>
        <name>1</name>
        <sequence type="displayed"/>
    </isoform>
    <isoform>
        <id>P30926-2</id>
        <name>2</name>
        <sequence type="described" ref="VSP_046674 VSP_046675"/>
    </isoform>
</comment>
<comment type="similarity">
    <text evidence="19">Belongs to the ligand-gated ion channel (TC 1.A.9) family. Acetylcholine receptor (TC 1.A.9.1) subfamily. Beta-4/CHRNB4 sub-subfamily.</text>
</comment>
<reference key="1">
    <citation type="journal article" date="1996" name="J. Mol. Neurosci.">
        <title>Comparative structure of human neuronal alpha 2-alpha 7 and beta 2-beta 4 nicotinic acetylcholine receptor subunits and functional expression of the alpha 2, alpha 3, alpha 4, alpha 7, beta 2, and beta 4 subunits.</title>
        <authorList>
            <person name="Elliott K.J."/>
            <person name="Ellis S.B."/>
            <person name="Berckhan K.J."/>
            <person name="Urrutia A."/>
            <person name="Chavez-Noriega L.E."/>
            <person name="Johnson E.C."/>
            <person name="Velicelebi G."/>
            <person name="Harpold M.M."/>
        </authorList>
    </citation>
    <scope>NUCLEOTIDE SEQUENCE [MRNA] (ISOFORM 1)</scope>
    <scope>SUBUNIT</scope>
    <scope>FUNCTION</scope>
    <scope>ACTIVITY REGULATION</scope>
</reference>
<reference key="2">
    <citation type="journal article" date="1997" name="Mol. Pharmacol.">
        <title>'Orphan' alpha6 nicotinic AChR subunit can form a functional heteromeric acetylcholine receptor.</title>
        <authorList>
            <person name="Gerzanich V."/>
            <person name="Kuryatov A."/>
            <person name="Anand R."/>
            <person name="Lindstrom J."/>
        </authorList>
    </citation>
    <scope>NUCLEOTIDE SEQUENCE [MRNA] (ISOFORM 1)</scope>
    <scope>FUNCTION</scope>
    <scope>CATALYTIC ACTIVITY</scope>
    <scope>SUBUNIT</scope>
</reference>
<reference key="3">
    <citation type="journal article" date="1997" name="FEBS Lett.">
        <title>Cloning and sequence of full-length cDNAs encoding the human neuronal nicotinic acetylcholine receptor (nAChR) subunits beta3 and beta4 and expression of seven nAChR subunits in the human neuroblastoma cell line SH-SY5Y and/or IMR-32.</title>
        <authorList>
            <person name="Groot Kormelink P.J."/>
            <person name="Luyten W.H.M.L."/>
        </authorList>
    </citation>
    <scope>NUCLEOTIDE SEQUENCE [MRNA] (ISOFORM 1)</scope>
</reference>
<reference key="4">
    <citation type="submission" date="2001-03" db="EMBL/GenBank/DDBJ databases">
        <title>Characterization of the genomic structure of human nicotinic acetylcholine receptor CHRNA5/A3/B4 gene cluster: identification of two novel introns in the 3' untranslated region of CHRNA3 and of a tail-to-tail overlap between CHRNA3 and CHRNA5.</title>
        <authorList>
            <person name="Duga S."/>
            <person name="Solda G."/>
            <person name="Asselta R."/>
            <person name="Bonati M.T."/>
            <person name="Dalpra L."/>
            <person name="Malcovati M."/>
            <person name="Tenchini M.L."/>
        </authorList>
    </citation>
    <scope>NUCLEOTIDE SEQUENCE [GENOMIC DNA] (ISOFORM 1)</scope>
</reference>
<reference key="5">
    <citation type="journal article" date="2001" name="J. Hum. Genet.">
        <title>Characterization of the human beta4 nAChR gene and polymorphisms in CHRNA3 and CHRNB4.</title>
        <authorList>
            <person name="Lev-Lehman E."/>
            <person name="Bercovich D."/>
            <person name="Xu W."/>
            <person name="Stockton D.W."/>
            <person name="Beaudet A.L."/>
        </authorList>
    </citation>
    <scope>NUCLEOTIDE SEQUENCE [GENOMIC DNA] (ISOFORM 1)</scope>
    <scope>VARIANTS TRP-136; GLY-140 AND VAL-467</scope>
</reference>
<reference key="6">
    <citation type="journal article" date="2006" name="Nature">
        <title>Analysis of the DNA sequence and duplication history of human chromosome 15.</title>
        <authorList>
            <person name="Zody M.C."/>
            <person name="Garber M."/>
            <person name="Sharpe T."/>
            <person name="Young S.K."/>
            <person name="Rowen L."/>
            <person name="O'Neill K."/>
            <person name="Whittaker C.A."/>
            <person name="Kamal M."/>
            <person name="Chang J.L."/>
            <person name="Cuomo C.A."/>
            <person name="Dewar K."/>
            <person name="FitzGerald M.G."/>
            <person name="Kodira C.D."/>
            <person name="Madan A."/>
            <person name="Qin S."/>
            <person name="Yang X."/>
            <person name="Abbasi N."/>
            <person name="Abouelleil A."/>
            <person name="Arachchi H.M."/>
            <person name="Baradarani L."/>
            <person name="Birditt B."/>
            <person name="Bloom S."/>
            <person name="Bloom T."/>
            <person name="Borowsky M.L."/>
            <person name="Burke J."/>
            <person name="Butler J."/>
            <person name="Cook A."/>
            <person name="DeArellano K."/>
            <person name="DeCaprio D."/>
            <person name="Dorris L. III"/>
            <person name="Dors M."/>
            <person name="Eichler E.E."/>
            <person name="Engels R."/>
            <person name="Fahey J."/>
            <person name="Fleetwood P."/>
            <person name="Friedman C."/>
            <person name="Gearin G."/>
            <person name="Hall J.L."/>
            <person name="Hensley G."/>
            <person name="Johnson E."/>
            <person name="Jones C."/>
            <person name="Kamat A."/>
            <person name="Kaur A."/>
            <person name="Locke D.P."/>
            <person name="Madan A."/>
            <person name="Munson G."/>
            <person name="Jaffe D.B."/>
            <person name="Lui A."/>
            <person name="Macdonald P."/>
            <person name="Mauceli E."/>
            <person name="Naylor J.W."/>
            <person name="Nesbitt R."/>
            <person name="Nicol R."/>
            <person name="O'Leary S.B."/>
            <person name="Ratcliffe A."/>
            <person name="Rounsley S."/>
            <person name="She X."/>
            <person name="Sneddon K.M.B."/>
            <person name="Stewart S."/>
            <person name="Sougnez C."/>
            <person name="Stone S.M."/>
            <person name="Topham K."/>
            <person name="Vincent D."/>
            <person name="Wang S."/>
            <person name="Zimmer A.R."/>
            <person name="Birren B.W."/>
            <person name="Hood L."/>
            <person name="Lander E.S."/>
            <person name="Nusbaum C."/>
        </authorList>
    </citation>
    <scope>NUCLEOTIDE SEQUENCE [LARGE SCALE GENOMIC DNA]</scope>
</reference>
<reference key="7">
    <citation type="journal article" date="2004" name="Genome Res.">
        <title>The status, quality, and expansion of the NIH full-length cDNA project: the Mammalian Gene Collection (MGC).</title>
        <authorList>
            <consortium name="The MGC Project Team"/>
        </authorList>
    </citation>
    <scope>NUCLEOTIDE SEQUENCE [LARGE SCALE MRNA] (ISOFORM 1)</scope>
    <scope>NUCLEOTIDE SEQUENCE [LARGE SCALE MRNA] OF 1-198 (ISOFORM 2)</scope>
</reference>
<reference key="8">
    <citation type="journal article" date="2002" name="J. Biol. Chem.">
        <title>Transcription factors NF-Y and Sp1 are important determinants of the promoter activity of the bovine and human neuronal nicotinic receptor beta 4 subunit genes.</title>
        <authorList>
            <person name="Valor L.M."/>
            <person name="Campos-Caro A."/>
            <person name="Carrasco-Serrano C."/>
            <person name="Ortiz J.A."/>
            <person name="Ballesta J.J."/>
            <person name="Criado M."/>
        </authorList>
    </citation>
    <scope>NUCLEOTIDE SEQUENCE [GENOMIC DNA] OF 1-18</scope>
</reference>
<reference key="9">
    <citation type="journal article" date="1992" name="FEBS Lett.">
        <title>Neuronal-type nicotinic receptors in human neuroblastoma and small-cell lung carcinoma cell lines.</title>
        <authorList>
            <person name="Tarroni P."/>
            <person name="Rubboli F."/>
            <person name="Chini B."/>
            <person name="Zwart R."/>
            <person name="Oortgiesen M."/>
            <person name="Sher E."/>
            <person name="Clementi F."/>
        </authorList>
    </citation>
    <scope>NUCLEOTIDE SEQUENCE [MRNA] OF 48-498</scope>
</reference>
<reference key="10">
    <citation type="journal article" date="1996" name="J. Biol. Chem.">
        <title>Assembly of human neuronal nicotinic receptor alpha5 subunits with alpha3, beta2, and beta4 subunits.</title>
        <authorList>
            <person name="Wang F."/>
            <person name="Gerzanich V."/>
            <person name="Wells G.B."/>
            <person name="Anand R."/>
            <person name="Peng X."/>
            <person name="Keyser K."/>
            <person name="Lindstrom J."/>
        </authorList>
    </citation>
    <scope>FUNCTION</scope>
    <scope>SUBUNIT</scope>
</reference>
<reference key="11">
    <citation type="journal article" date="2000" name="J. Physiol. (Lond.)">
        <title>Stoichiometry of human recombinant neuronal nicotinic receptors containing the b3 subunit expressed in Xenopus oocytes.</title>
        <authorList>
            <person name="Boorman J.P."/>
            <person name="Groot-Kormelink P.J."/>
            <person name="Sivilotti L.G."/>
        </authorList>
    </citation>
    <scope>FUNCTION</scope>
    <scope>SUBUNIT</scope>
    <scope>STOICHIOMETRY</scope>
    <scope>ACTIVITY REGULATION</scope>
    <scope>MUTAGENESIS OF LEU-272</scope>
</reference>
<reference key="12">
    <citation type="journal article" date="2004" name="Biochemistry">
        <title>Alpha-conotoxins ImI and ImII target distinct regions of the human alpha7 nicotinic acetylcholine receptor and distinguish human nicotinic receptor subtypes.</title>
        <authorList>
            <person name="Ellison M."/>
            <person name="Gao F."/>
            <person name="Wang H.L."/>
            <person name="Sine S.M."/>
            <person name="McIntosh J.M."/>
            <person name="Olivera B.M."/>
        </authorList>
    </citation>
    <scope>ACTIVITY REGULATION</scope>
</reference>
<reference key="13">
    <citation type="journal article" date="2005" name="Mol. Pharmacol.">
        <title>RIC-3 enhances functional expression of multiple nicotinic acetylcholine receptor subtypes in mammalian cells.</title>
        <authorList>
            <person name="Lansdell S.J."/>
            <person name="Gee V.J."/>
            <person name="Harkness P.C."/>
            <person name="Doward A.I."/>
            <person name="Baker E.R."/>
            <person name="Gibb A.J."/>
            <person name="Millar N.S."/>
        </authorList>
    </citation>
    <scope>INTERACTION WITH RIC3</scope>
</reference>
<reference key="14">
    <citation type="journal article" date="2011" name="Mol. Pharmacol.">
        <title>Acetylcholine receptor (AChR) alpha5 subunit variant associated with risk for nicotine dependence and lung cancer reduces (alpha4beta2)(2)alpha5 AChR function.</title>
        <authorList>
            <person name="Kuryatov A."/>
            <person name="Berrettini W."/>
            <person name="Lindstrom J."/>
        </authorList>
    </citation>
    <scope>FUNCTION</scope>
    <scope>CATALYTIC ACTIVITY</scope>
    <scope>SUBUNIT</scope>
    <scope>ACTIVITY REGULATION</scope>
</reference>
<reference key="15">
    <citation type="journal article" date="2016" name="J. Neurochem.">
        <title>Functional interaction between Lypd6 and nicotinic acetylcholine receptors.</title>
        <authorList>
            <person name="Arvaniti M."/>
            <person name="Jensen M.M."/>
            <person name="Soni N."/>
            <person name="Wang H."/>
            <person name="Klein A.B."/>
            <person name="Thiriet N."/>
            <person name="Pinborg L.H."/>
            <person name="Muldoon P.P."/>
            <person name="Wienecke J."/>
            <person name="Imad Damaj M."/>
            <person name="Kohlmeier K.A."/>
            <person name="Gondre-Lewis M.C."/>
            <person name="Mikkelsen J.D."/>
            <person name="Thomsen M.S."/>
        </authorList>
    </citation>
    <scope>INTERACTION WITH LYPD6</scope>
</reference>
<reference evidence="21 22" key="16">
    <citation type="journal article" date="2019" name="Neuron">
        <title>Agonist Selectivity and Ion Permeation in the alpha3beta4 Ganglionic Nicotinic Receptor.</title>
        <authorList>
            <person name="Gharpure A."/>
            <person name="Teng J."/>
            <person name="Zhuang Y."/>
            <person name="Noviello C.M."/>
            <person name="Walsh R.M."/>
            <person name="Cabuco R."/>
            <person name="Howard R.J."/>
            <person name="Zaveri N.T."/>
            <person name="Lindahl E."/>
            <person name="Hibbs R.E."/>
        </authorList>
    </citation>
    <scope>STRUCTURE BY ELECTRON MICROSCOPY (3.34 ANGSTROMS) OF 22-498 IN COMPLEX WITH CHRNA3 AND SODIUM</scope>
    <scope>SUBUNIT</scope>
    <scope>FUNCTION</scope>
    <scope>ACTIVITY REGULATION</scope>
</reference>
<accession>P30926</accession>
<accession>A4FTX5</accession>
<accession>E9PHE8</accession>
<accession>Q16607</accession>
<accession>Q4VBA5</accession>
<accession>Q8WXC8</accession>
<accession>Q9BQR4</accession>
<proteinExistence type="evidence at protein level"/>
<sequence>MRRAPSLVLFFLVALCGRGNCRVANAEEKLMDDLLNKTRYNNLIRPATSSSQLISIKLQLSLAQLISVNEREQIMTTNVWLKQEWTDYRLTWNSSRYEGVNILRIPAKRIWLPDIVLYNNADGTYEVSVYTNLIVRSNGSVLWLPPAIYKSACKIEVKYFPFDQQNCTLKFRSWTYDHTEIDMVLMTPTASMDDFTPSGEWDIVALPGRRTVNPQDPSYVDVTYDFIIKRKPLFYTINLIIPCVLTTLLAILVFYLPSDCGEKMTLCISVLLALTFFLLLISKIVPPTSLDVPLIGKYLMFTMVLVTFSIVTSVCVLNVHHRSPSTHTMAPWVKRCFLHKLPTFLFMKRPGPDSSPARAFPPSKSCVTKPEATATSTSPSNFYGNSMYFVNPASAASKSPAGSTPVAIPRDFWLRSSGRFRQDVQEALEGVSFIAQHMKNDDEDQSVVEDWKYVAMVVDRLFLWVFMFVCVLGTVGLFLPPLFQTHAASEGPYAAQRD</sequence>